<sequence length="236" mass="26628">MSRNFYNYDPTVDILQPPLIPDVILKSNLKELTLPTGNQVLESLPLTAWFHRTRSNIISHLTRYEAEWETQKSAARNELHSVKSYLKGNIFNDARELYALPETNILTICAYFAGRIITNRKNWGVSAATLQSVKSSVHRPSLMARVCTSIPSKMVLPWAMAGAVFKELAPTAFDNTITSLESDILDPGFVAQYKTLWRDYYTNGAKKASIEAAELLEGKLQGYIGFARNFIIYSTR</sequence>
<proteinExistence type="inferred from homology"/>
<comment type="function">
    <text evidence="1">Component of the MICOS complex, a large protein complex of the mitochondrial inner membrane that plays crucial roles in the maintenance of crista junctions, inner membrane architecture, and formation of contact sites to the outer membrane.</text>
</comment>
<comment type="subunit">
    <text evidence="1">Component of the mitochondrial contact site and cristae organizing system (MICOS) complex.</text>
</comment>
<comment type="subcellular location">
    <subcellularLocation>
        <location evidence="1">Mitochondrion inner membrane</location>
        <topology evidence="3">Multi-pass membrane protein</topology>
    </subcellularLocation>
</comment>
<comment type="similarity">
    <text evidence="3">Belongs to the apolipoprotein O/MICOS complex subunit Mic27 family.</text>
</comment>
<organism>
    <name type="scientific">Eremothecium gossypii (strain ATCC 10895 / CBS 109.51 / FGSC 9923 / NRRL Y-1056)</name>
    <name type="common">Yeast</name>
    <name type="synonym">Ashbya gossypii</name>
    <dbReference type="NCBI Taxonomy" id="284811"/>
    <lineage>
        <taxon>Eukaryota</taxon>
        <taxon>Fungi</taxon>
        <taxon>Dikarya</taxon>
        <taxon>Ascomycota</taxon>
        <taxon>Saccharomycotina</taxon>
        <taxon>Saccharomycetes</taxon>
        <taxon>Saccharomycetales</taxon>
        <taxon>Saccharomycetaceae</taxon>
        <taxon>Eremothecium</taxon>
    </lineage>
</organism>
<dbReference type="EMBL" id="AE016818">
    <property type="protein sequence ID" value="AAS53059.1"/>
    <property type="molecule type" value="Genomic_DNA"/>
</dbReference>
<dbReference type="RefSeq" id="NP_985235.1">
    <property type="nucleotide sequence ID" value="NM_210589.1"/>
</dbReference>
<dbReference type="SMR" id="Q755Y8"/>
<dbReference type="FunCoup" id="Q755Y8">
    <property type="interactions" value="52"/>
</dbReference>
<dbReference type="STRING" id="284811.Q755Y8"/>
<dbReference type="EnsemblFungi" id="AAS53059">
    <property type="protein sequence ID" value="AAS53059"/>
    <property type="gene ID" value="AGOS_AER379C"/>
</dbReference>
<dbReference type="GeneID" id="4621451"/>
<dbReference type="KEGG" id="ago:AGOS_AER379C"/>
<dbReference type="eggNOG" id="ENOG502S31N">
    <property type="taxonomic scope" value="Eukaryota"/>
</dbReference>
<dbReference type="HOGENOM" id="CLU_093584_0_0_1"/>
<dbReference type="InParanoid" id="Q755Y8"/>
<dbReference type="OMA" id="KYKVCKG"/>
<dbReference type="OrthoDB" id="4039294at2759"/>
<dbReference type="Proteomes" id="UP000000591">
    <property type="component" value="Chromosome V"/>
</dbReference>
<dbReference type="GO" id="GO:0061617">
    <property type="term" value="C:MICOS complex"/>
    <property type="evidence" value="ECO:0007669"/>
    <property type="project" value="EnsemblFungi"/>
</dbReference>
<dbReference type="GO" id="GO:0044284">
    <property type="term" value="C:mitochondrial crista junction"/>
    <property type="evidence" value="ECO:0007669"/>
    <property type="project" value="EnsemblFungi"/>
</dbReference>
<dbReference type="GO" id="GO:0042407">
    <property type="term" value="P:cristae formation"/>
    <property type="evidence" value="ECO:0007669"/>
    <property type="project" value="EnsemblFungi"/>
</dbReference>
<dbReference type="GO" id="GO:0032461">
    <property type="term" value="P:positive regulation of protein oligomerization"/>
    <property type="evidence" value="ECO:0007669"/>
    <property type="project" value="EnsemblFungi"/>
</dbReference>
<dbReference type="GO" id="GO:0043933">
    <property type="term" value="P:protein-containing complex organization"/>
    <property type="evidence" value="ECO:0007669"/>
    <property type="project" value="EnsemblFungi"/>
</dbReference>
<evidence type="ECO:0000250" key="1"/>
<evidence type="ECO:0000255" key="2"/>
<evidence type="ECO:0000305" key="3"/>
<reference key="1">
    <citation type="journal article" date="2004" name="Science">
        <title>The Ashbya gossypii genome as a tool for mapping the ancient Saccharomyces cerevisiae genome.</title>
        <authorList>
            <person name="Dietrich F.S."/>
            <person name="Voegeli S."/>
            <person name="Brachat S."/>
            <person name="Lerch A."/>
            <person name="Gates K."/>
            <person name="Steiner S."/>
            <person name="Mohr C."/>
            <person name="Poehlmann R."/>
            <person name="Luedi P."/>
            <person name="Choi S."/>
            <person name="Wing R.A."/>
            <person name="Flavier A."/>
            <person name="Gaffney T.D."/>
            <person name="Philippsen P."/>
        </authorList>
    </citation>
    <scope>NUCLEOTIDE SEQUENCE [LARGE SCALE GENOMIC DNA]</scope>
    <source>
        <strain>ATCC 10895 / CBS 109.51 / FGSC 9923 / NRRL Y-1056</strain>
    </source>
</reference>
<reference key="2">
    <citation type="journal article" date="2013" name="G3 (Bethesda)">
        <title>Genomes of Ashbya fungi isolated from insects reveal four mating-type loci, numerous translocations, lack of transposons, and distinct gene duplications.</title>
        <authorList>
            <person name="Dietrich F.S."/>
            <person name="Voegeli S."/>
            <person name="Kuo S."/>
            <person name="Philippsen P."/>
        </authorList>
    </citation>
    <scope>GENOME REANNOTATION</scope>
    <source>
        <strain>ATCC 10895 / CBS 109.51 / FGSC 9923 / NRRL Y-1056</strain>
    </source>
</reference>
<name>MIC27_EREGS</name>
<gene>
    <name type="primary">MIC27</name>
    <name type="ordered locus">AER379C</name>
</gene>
<keyword id="KW-0472">Membrane</keyword>
<keyword id="KW-0496">Mitochondrion</keyword>
<keyword id="KW-0999">Mitochondrion inner membrane</keyword>
<keyword id="KW-1185">Reference proteome</keyword>
<keyword id="KW-0812">Transmembrane</keyword>
<keyword id="KW-1133">Transmembrane helix</keyword>
<accession>Q755Y8</accession>
<protein>
    <recommendedName>
        <fullName>MICOS complex subunit MIC27</fullName>
    </recommendedName>
</protein>
<feature type="chain" id="PRO_0000399832" description="MICOS complex subunit MIC27">
    <location>
        <begin position="1"/>
        <end position="236"/>
    </location>
</feature>
<feature type="topological domain" description="Mitochondrial intermembrane" evidence="2">
    <location>
        <begin position="1"/>
        <end position="96"/>
    </location>
</feature>
<feature type="transmembrane region" description="Helical" evidence="2">
    <location>
        <begin position="97"/>
        <end position="113"/>
    </location>
</feature>
<feature type="topological domain" description="Mitochondrial matrix" evidence="2">
    <location>
        <begin position="114"/>
        <end position="145"/>
    </location>
</feature>
<feature type="transmembrane region" description="Helical" evidence="2">
    <location>
        <begin position="146"/>
        <end position="165"/>
    </location>
</feature>
<feature type="topological domain" description="Mitochondrial intermembrane" evidence="2">
    <location>
        <begin position="166"/>
        <end position="236"/>
    </location>
</feature>